<sequence>MAVGKNKRLSKGKKGLKKKVVDPFTRKDWFDIKAPTTFENRNVGKTLINRSTGLKNAADGLKGRVFEVCLADLQGSEDHSYRKIKLRVDEVQGKNLLTNFHGLDFTSDKLRSLVRKWQSLVEANVTVKTADDYVLRVFAIAFTKRQANQIKKTTYAQSSKLREVRKKMIEIMQREVSNCTLAQLTSKLIPEVIGREIEKSTQTIFPLQNVHIRKVKLLKQPKFDLGSLLALHGEGSTEEKGKKVSSGFKDVVLESV</sequence>
<comment type="subunit">
    <text evidence="1">Component of the small ribosomal subunit. Mature ribosomes consist of a small (40S) and a large (60S) subunit. The 40S subunit contains about 33 different proteins and 1 molecule of RNA (18S). The 60S subunit contains about 49 different proteins and 3 molecules of RNA (25S, 5.8S and 5S).</text>
</comment>
<comment type="subcellular location">
    <subcellularLocation>
        <location evidence="1">Cytoplasm</location>
    </subcellularLocation>
</comment>
<comment type="similarity">
    <text evidence="1">Belongs to the eukaryotic ribosomal protein eS1 family.</text>
</comment>
<dbReference type="EMBL" id="GG692400">
    <property type="protein sequence ID" value="EER31562.1"/>
    <property type="molecule type" value="Genomic_DNA"/>
</dbReference>
<dbReference type="RefSeq" id="XP_002550047.1">
    <property type="nucleotide sequence ID" value="XM_002550001.1"/>
</dbReference>
<dbReference type="SMR" id="C5ME52"/>
<dbReference type="STRING" id="294747.C5ME52"/>
<dbReference type="EnsemblFungi" id="CTRG_04344-t43_1">
    <property type="protein sequence ID" value="CTRG_04344-t43_1-p1"/>
    <property type="gene ID" value="CTRG_04344"/>
</dbReference>
<dbReference type="GeneID" id="8296765"/>
<dbReference type="KEGG" id="ctp:CTRG_04344"/>
<dbReference type="VEuPathDB" id="FungiDB:CTRG_04344"/>
<dbReference type="eggNOG" id="KOG1628">
    <property type="taxonomic scope" value="Eukaryota"/>
</dbReference>
<dbReference type="HOGENOM" id="CLU_062507_0_0_1"/>
<dbReference type="OrthoDB" id="9834376at2759"/>
<dbReference type="Proteomes" id="UP000002037">
    <property type="component" value="Unassembled WGS sequence"/>
</dbReference>
<dbReference type="GO" id="GO:0022627">
    <property type="term" value="C:cytosolic small ribosomal subunit"/>
    <property type="evidence" value="ECO:0007669"/>
    <property type="project" value="UniProtKB-UniRule"/>
</dbReference>
<dbReference type="GO" id="GO:0003735">
    <property type="term" value="F:structural constituent of ribosome"/>
    <property type="evidence" value="ECO:0007669"/>
    <property type="project" value="UniProtKB-UniRule"/>
</dbReference>
<dbReference type="GO" id="GO:0006412">
    <property type="term" value="P:translation"/>
    <property type="evidence" value="ECO:0007669"/>
    <property type="project" value="UniProtKB-UniRule"/>
</dbReference>
<dbReference type="HAMAP" id="MF_03122">
    <property type="entry name" value="Ribosomal_eS1_euk"/>
    <property type="match status" value="1"/>
</dbReference>
<dbReference type="InterPro" id="IPR001593">
    <property type="entry name" value="Ribosomal_eS1"/>
</dbReference>
<dbReference type="InterPro" id="IPR018281">
    <property type="entry name" value="Ribosomal_eS1_CS"/>
</dbReference>
<dbReference type="InterPro" id="IPR027500">
    <property type="entry name" value="Ribosomal_eS1_euk"/>
</dbReference>
<dbReference type="PANTHER" id="PTHR11830">
    <property type="entry name" value="40S RIBOSOMAL PROTEIN S3A"/>
    <property type="match status" value="1"/>
</dbReference>
<dbReference type="Pfam" id="PF01015">
    <property type="entry name" value="Ribosomal_S3Ae"/>
    <property type="match status" value="1"/>
</dbReference>
<dbReference type="SMART" id="SM01397">
    <property type="entry name" value="Ribosomal_S3Ae"/>
    <property type="match status" value="1"/>
</dbReference>
<dbReference type="PROSITE" id="PS01191">
    <property type="entry name" value="RIBOSOMAL_S3AE"/>
    <property type="match status" value="1"/>
</dbReference>
<accession>C5ME52</accession>
<evidence type="ECO:0000255" key="1">
    <source>
        <dbReference type="HAMAP-Rule" id="MF_03122"/>
    </source>
</evidence>
<evidence type="ECO:0000305" key="2"/>
<keyword id="KW-0007">Acetylation</keyword>
<keyword id="KW-0963">Cytoplasm</keyword>
<keyword id="KW-1185">Reference proteome</keyword>
<keyword id="KW-0687">Ribonucleoprotein</keyword>
<keyword id="KW-0689">Ribosomal protein</keyword>
<gene>
    <name evidence="1" type="primary">RPS1</name>
    <name type="ORF">CTRG_04344</name>
</gene>
<reference key="1">
    <citation type="journal article" date="2009" name="Nature">
        <title>Evolution of pathogenicity and sexual reproduction in eight Candida genomes.</title>
        <authorList>
            <person name="Butler G."/>
            <person name="Rasmussen M.D."/>
            <person name="Lin M.F."/>
            <person name="Santos M.A.S."/>
            <person name="Sakthikumar S."/>
            <person name="Munro C.A."/>
            <person name="Rheinbay E."/>
            <person name="Grabherr M."/>
            <person name="Forche A."/>
            <person name="Reedy J.L."/>
            <person name="Agrafioti I."/>
            <person name="Arnaud M.B."/>
            <person name="Bates S."/>
            <person name="Brown A.J.P."/>
            <person name="Brunke S."/>
            <person name="Costanzo M.C."/>
            <person name="Fitzpatrick D.A."/>
            <person name="de Groot P.W.J."/>
            <person name="Harris D."/>
            <person name="Hoyer L.L."/>
            <person name="Hube B."/>
            <person name="Klis F.M."/>
            <person name="Kodira C."/>
            <person name="Lennard N."/>
            <person name="Logue M.E."/>
            <person name="Martin R."/>
            <person name="Neiman A.M."/>
            <person name="Nikolaou E."/>
            <person name="Quail M.A."/>
            <person name="Quinn J."/>
            <person name="Santos M.C."/>
            <person name="Schmitzberger F.F."/>
            <person name="Sherlock G."/>
            <person name="Shah P."/>
            <person name="Silverstein K.A.T."/>
            <person name="Skrzypek M.S."/>
            <person name="Soll D."/>
            <person name="Staggs R."/>
            <person name="Stansfield I."/>
            <person name="Stumpf M.P.H."/>
            <person name="Sudbery P.E."/>
            <person name="Srikantha T."/>
            <person name="Zeng Q."/>
            <person name="Berman J."/>
            <person name="Berriman M."/>
            <person name="Heitman J."/>
            <person name="Gow N.A.R."/>
            <person name="Lorenz M.C."/>
            <person name="Birren B.W."/>
            <person name="Kellis M."/>
            <person name="Cuomo C.A."/>
        </authorList>
    </citation>
    <scope>NUCLEOTIDE SEQUENCE [LARGE SCALE GENOMIC DNA]</scope>
    <source>
        <strain>ATCC MYA-3404 / T1</strain>
    </source>
</reference>
<proteinExistence type="inferred from homology"/>
<feature type="initiator methionine" description="Removed" evidence="1">
    <location>
        <position position="1"/>
    </location>
</feature>
<feature type="chain" id="PRO_0000389366" description="Small ribosomal subunit protein eS1">
    <location>
        <begin position="2"/>
        <end position="256"/>
    </location>
</feature>
<feature type="modified residue" description="N-acetylalanine; partial" evidence="1">
    <location>
        <position position="2"/>
    </location>
</feature>
<name>RS3A_CANTT</name>
<organism>
    <name type="scientific">Candida tropicalis (strain ATCC MYA-3404 / T1)</name>
    <name type="common">Yeast</name>
    <dbReference type="NCBI Taxonomy" id="294747"/>
    <lineage>
        <taxon>Eukaryota</taxon>
        <taxon>Fungi</taxon>
        <taxon>Dikarya</taxon>
        <taxon>Ascomycota</taxon>
        <taxon>Saccharomycotina</taxon>
        <taxon>Pichiomycetes</taxon>
        <taxon>Debaryomycetaceae</taxon>
        <taxon>Candida/Lodderomyces clade</taxon>
        <taxon>Candida</taxon>
    </lineage>
</organism>
<protein>
    <recommendedName>
        <fullName evidence="1">Small ribosomal subunit protein eS1</fullName>
    </recommendedName>
    <alternativeName>
        <fullName evidence="2">40S ribosomal protein S1</fullName>
    </alternativeName>
</protein>